<dbReference type="EMBL" id="CP000901">
    <property type="protein sequence ID" value="ABX87847.1"/>
    <property type="molecule type" value="Genomic_DNA"/>
</dbReference>
<dbReference type="RefSeq" id="WP_002211739.1">
    <property type="nucleotide sequence ID" value="NZ_CP009935.1"/>
</dbReference>
<dbReference type="KEGG" id="ypg:YpAngola_A2394"/>
<dbReference type="PATRIC" id="fig|349746.12.peg.3411"/>
<dbReference type="HAMAP" id="MF_00676">
    <property type="entry name" value="UPF0260"/>
    <property type="match status" value="1"/>
</dbReference>
<dbReference type="InterPro" id="IPR005358">
    <property type="entry name" value="Puta_zinc/iron-chelating_dom"/>
</dbReference>
<dbReference type="InterPro" id="IPR008228">
    <property type="entry name" value="UCP006173"/>
</dbReference>
<dbReference type="NCBIfam" id="NF003498">
    <property type="entry name" value="PRK05170.1-1"/>
    <property type="match status" value="1"/>
</dbReference>
<dbReference type="NCBIfam" id="NF003501">
    <property type="entry name" value="PRK05170.1-5"/>
    <property type="match status" value="1"/>
</dbReference>
<dbReference type="NCBIfam" id="NF003507">
    <property type="entry name" value="PRK05170.2-5"/>
    <property type="match status" value="1"/>
</dbReference>
<dbReference type="PANTHER" id="PTHR37421">
    <property type="entry name" value="UPF0260 PROTEIN YCGN"/>
    <property type="match status" value="1"/>
</dbReference>
<dbReference type="PANTHER" id="PTHR37421:SF1">
    <property type="entry name" value="UPF0260 PROTEIN YCGN"/>
    <property type="match status" value="1"/>
</dbReference>
<dbReference type="Pfam" id="PF03692">
    <property type="entry name" value="CxxCxxCC"/>
    <property type="match status" value="1"/>
</dbReference>
<dbReference type="PIRSF" id="PIRSF006173">
    <property type="entry name" value="UCP006173"/>
    <property type="match status" value="1"/>
</dbReference>
<feature type="chain" id="PRO_1000131644" description="UPF0260 protein YpAngola_A2394">
    <location>
        <begin position="1"/>
        <end position="148"/>
    </location>
</feature>
<gene>
    <name type="ordered locus">YpAngola_A2394</name>
</gene>
<protein>
    <recommendedName>
        <fullName evidence="1">UPF0260 protein YpAngola_A2394</fullName>
    </recommendedName>
</protein>
<sequence length="148" mass="17175">MSQPPFWQQKTLAEMSDSEWESLCDGCGQCCLNKLIDEDTDEIYFTNVACDQLNIKTCQCSNYERRFELEEDCIKLTRENLVTFAWLPPTCAYRLIGEGHDLPRWHPLLTGSKAAMHGERISVRHIAVRESEVVDWQDHILNKPSWAK</sequence>
<organism>
    <name type="scientific">Yersinia pestis bv. Antiqua (strain Angola)</name>
    <dbReference type="NCBI Taxonomy" id="349746"/>
    <lineage>
        <taxon>Bacteria</taxon>
        <taxon>Pseudomonadati</taxon>
        <taxon>Pseudomonadota</taxon>
        <taxon>Gammaproteobacteria</taxon>
        <taxon>Enterobacterales</taxon>
        <taxon>Yersiniaceae</taxon>
        <taxon>Yersinia</taxon>
    </lineage>
</organism>
<comment type="similarity">
    <text evidence="1">Belongs to the UPF0260 family.</text>
</comment>
<name>Y2394_YERPG</name>
<proteinExistence type="inferred from homology"/>
<evidence type="ECO:0000255" key="1">
    <source>
        <dbReference type="HAMAP-Rule" id="MF_00676"/>
    </source>
</evidence>
<accession>A9QYU7</accession>
<reference key="1">
    <citation type="journal article" date="2010" name="J. Bacteriol.">
        <title>Genome sequence of the deep-rooted Yersinia pestis strain Angola reveals new insights into the evolution and pangenome of the plague bacterium.</title>
        <authorList>
            <person name="Eppinger M."/>
            <person name="Worsham P.L."/>
            <person name="Nikolich M.P."/>
            <person name="Riley D.R."/>
            <person name="Sebastian Y."/>
            <person name="Mou S."/>
            <person name="Achtman M."/>
            <person name="Lindler L.E."/>
            <person name="Ravel J."/>
        </authorList>
    </citation>
    <scope>NUCLEOTIDE SEQUENCE [LARGE SCALE GENOMIC DNA]</scope>
    <source>
        <strain>Angola</strain>
    </source>
</reference>